<organism>
    <name type="scientific">Yersinia pseudotuberculosis serotype O:3 (strain YPIII)</name>
    <dbReference type="NCBI Taxonomy" id="502800"/>
    <lineage>
        <taxon>Bacteria</taxon>
        <taxon>Pseudomonadati</taxon>
        <taxon>Pseudomonadota</taxon>
        <taxon>Gammaproteobacteria</taxon>
        <taxon>Enterobacterales</taxon>
        <taxon>Yersiniaceae</taxon>
        <taxon>Yersinia</taxon>
    </lineage>
</organism>
<gene>
    <name evidence="1" type="primary">darP</name>
    <name type="ordered locus">YPK_0489</name>
</gene>
<feature type="chain" id="PRO_1000198408" description="Dual-action ribosomal maturation protein DarP">
    <location>
        <begin position="1"/>
        <end position="182"/>
    </location>
</feature>
<protein>
    <recommendedName>
        <fullName evidence="1">Dual-action ribosomal maturation protein DarP</fullName>
    </recommendedName>
    <alternativeName>
        <fullName evidence="1">Large ribosomal subunit assembly factor DarP</fullName>
    </alternativeName>
</protein>
<reference key="1">
    <citation type="submission" date="2008-02" db="EMBL/GenBank/DDBJ databases">
        <title>Complete sequence of Yersinia pseudotuberculosis YPIII.</title>
        <authorList>
            <consortium name="US DOE Joint Genome Institute"/>
            <person name="Copeland A."/>
            <person name="Lucas S."/>
            <person name="Lapidus A."/>
            <person name="Glavina del Rio T."/>
            <person name="Dalin E."/>
            <person name="Tice H."/>
            <person name="Bruce D."/>
            <person name="Goodwin L."/>
            <person name="Pitluck S."/>
            <person name="Munk A.C."/>
            <person name="Brettin T."/>
            <person name="Detter J.C."/>
            <person name="Han C."/>
            <person name="Tapia R."/>
            <person name="Schmutz J."/>
            <person name="Larimer F."/>
            <person name="Land M."/>
            <person name="Hauser L."/>
            <person name="Challacombe J.F."/>
            <person name="Green L."/>
            <person name="Lindler L.E."/>
            <person name="Nikolich M.P."/>
            <person name="Richardson P."/>
        </authorList>
    </citation>
    <scope>NUCLEOTIDE SEQUENCE [LARGE SCALE GENOMIC DNA]</scope>
    <source>
        <strain>YPIII</strain>
    </source>
</reference>
<sequence length="182" mass="21128">MNKQPEDWLDDVPENKNDDDDEIIWVSKSEIKRDAEALKDLGTELVDLGKNALERIPLDEDLLAAIELAQKIKKEGRRRQIQLIGKMLRARDVEPIQTALDKLKNRHNQQVSLFHKLETLRDRLIAEGDDAIPTVLELYPDADRQQLRSLVRNAQKEQAANKPPKSFRQIFSYLRELAEKQQ</sequence>
<dbReference type="EMBL" id="CP000950">
    <property type="protein sequence ID" value="ACA66792.1"/>
    <property type="molecule type" value="Genomic_DNA"/>
</dbReference>
<dbReference type="SMR" id="B1JKI7"/>
<dbReference type="KEGG" id="ypy:YPK_0489"/>
<dbReference type="PATRIC" id="fig|502800.11.peg.1099"/>
<dbReference type="GO" id="GO:0005829">
    <property type="term" value="C:cytosol"/>
    <property type="evidence" value="ECO:0007669"/>
    <property type="project" value="TreeGrafter"/>
</dbReference>
<dbReference type="GO" id="GO:0043022">
    <property type="term" value="F:ribosome binding"/>
    <property type="evidence" value="ECO:0007669"/>
    <property type="project" value="UniProtKB-UniRule"/>
</dbReference>
<dbReference type="GO" id="GO:0019843">
    <property type="term" value="F:rRNA binding"/>
    <property type="evidence" value="ECO:0007669"/>
    <property type="project" value="UniProtKB-UniRule"/>
</dbReference>
<dbReference type="GO" id="GO:1902626">
    <property type="term" value="P:assembly of large subunit precursor of preribosome"/>
    <property type="evidence" value="ECO:0007669"/>
    <property type="project" value="UniProtKB-UniRule"/>
</dbReference>
<dbReference type="CDD" id="cd16331">
    <property type="entry name" value="YjgA-like"/>
    <property type="match status" value="1"/>
</dbReference>
<dbReference type="FunFam" id="1.10.60.30:FF:000001">
    <property type="entry name" value="UPF0307 protein YjgA"/>
    <property type="match status" value="1"/>
</dbReference>
<dbReference type="FunFam" id="1.10.60.30:FF:000002">
    <property type="entry name" value="UPF0307 protein YjgA"/>
    <property type="match status" value="1"/>
</dbReference>
<dbReference type="Gene3D" id="1.10.60.30">
    <property type="entry name" value="PSPTO4464-like domains"/>
    <property type="match status" value="2"/>
</dbReference>
<dbReference type="HAMAP" id="MF_00765">
    <property type="entry name" value="DarP"/>
    <property type="match status" value="1"/>
</dbReference>
<dbReference type="InterPro" id="IPR006839">
    <property type="entry name" value="DarP"/>
</dbReference>
<dbReference type="InterPro" id="IPR023153">
    <property type="entry name" value="DarP_sf"/>
</dbReference>
<dbReference type="NCBIfam" id="NF003593">
    <property type="entry name" value="PRK05255.1-1"/>
    <property type="match status" value="1"/>
</dbReference>
<dbReference type="PANTHER" id="PTHR38101">
    <property type="entry name" value="UPF0307 PROTEIN YJGA"/>
    <property type="match status" value="1"/>
</dbReference>
<dbReference type="PANTHER" id="PTHR38101:SF1">
    <property type="entry name" value="UPF0307 PROTEIN YJGA"/>
    <property type="match status" value="1"/>
</dbReference>
<dbReference type="Pfam" id="PF04751">
    <property type="entry name" value="DarP"/>
    <property type="match status" value="1"/>
</dbReference>
<dbReference type="PIRSF" id="PIRSF016183">
    <property type="entry name" value="UCP016183"/>
    <property type="match status" value="1"/>
</dbReference>
<dbReference type="SUPFAM" id="SSF158710">
    <property type="entry name" value="PSPTO4464-like"/>
    <property type="match status" value="1"/>
</dbReference>
<name>DARP_YERPY</name>
<accession>B1JKI7</accession>
<evidence type="ECO:0000255" key="1">
    <source>
        <dbReference type="HAMAP-Rule" id="MF_00765"/>
    </source>
</evidence>
<comment type="function">
    <text evidence="1">Member of a network of 50S ribosomal subunit biogenesis factors which assembles along the 30S-50S interface, preventing incorrect 23S rRNA structures from forming. Promotes peptidyl transferase center (PTC) maturation.</text>
</comment>
<comment type="subcellular location">
    <subcellularLocation>
        <location evidence="1">Cytoplasm</location>
    </subcellularLocation>
    <text evidence="1">Associates with late stage pre-50S ribosomal subunits.</text>
</comment>
<comment type="similarity">
    <text evidence="1">Belongs to the DarP family.</text>
</comment>
<proteinExistence type="inferred from homology"/>
<keyword id="KW-0963">Cytoplasm</keyword>
<keyword id="KW-0690">Ribosome biogenesis</keyword>
<keyword id="KW-0694">RNA-binding</keyword>
<keyword id="KW-0699">rRNA-binding</keyword>